<sequence>MKIEYFGHSAFKIVSEEGLIMLIDPFISNNPLCSTPVETIDADVILITHGHSDHFGDALEIANNSGATIIATAEIANFVQRQGINAIAMNIGGTVSINNLVNVTMTDARHTSSIDFTEEVEEGGSATGFVITLESGKKIYHAGDTGLFGDMKTVIGDIYKPDIALIPIGDKYTMGIEDAAIAAKWLQSRIVIPMHYNTFPGIEQDVELFAKNVEDEIIGTMTVPLMPGEDYREE</sequence>
<dbReference type="EMBL" id="CP000102">
    <property type="protein sequence ID" value="ABC56915.1"/>
    <property type="molecule type" value="Genomic_DNA"/>
</dbReference>
<dbReference type="RefSeq" id="WP_011406115.1">
    <property type="nucleotide sequence ID" value="NC_007681.1"/>
</dbReference>
<dbReference type="SMR" id="Q2NGY8"/>
<dbReference type="STRING" id="339860.Msp_0516"/>
<dbReference type="KEGG" id="mst:Msp_0516"/>
<dbReference type="eggNOG" id="arCOG00497">
    <property type="taxonomic scope" value="Archaea"/>
</dbReference>
<dbReference type="HOGENOM" id="CLU_070010_4_0_2"/>
<dbReference type="OrthoDB" id="28313at2157"/>
<dbReference type="Proteomes" id="UP000001931">
    <property type="component" value="Chromosome"/>
</dbReference>
<dbReference type="GO" id="GO:0016787">
    <property type="term" value="F:hydrolase activity"/>
    <property type="evidence" value="ECO:0007669"/>
    <property type="project" value="UniProtKB-UniRule"/>
</dbReference>
<dbReference type="Gene3D" id="3.60.15.10">
    <property type="entry name" value="Ribonuclease Z/Hydroxyacylglutathione hydrolase-like"/>
    <property type="match status" value="1"/>
</dbReference>
<dbReference type="HAMAP" id="MF_00457">
    <property type="entry name" value="UPF0173"/>
    <property type="match status" value="1"/>
</dbReference>
<dbReference type="InterPro" id="IPR001279">
    <property type="entry name" value="Metallo-B-lactamas"/>
</dbReference>
<dbReference type="InterPro" id="IPR036866">
    <property type="entry name" value="RibonucZ/Hydroxyglut_hydro"/>
</dbReference>
<dbReference type="InterPro" id="IPR022877">
    <property type="entry name" value="UPF0173"/>
</dbReference>
<dbReference type="InterPro" id="IPR050114">
    <property type="entry name" value="UPF0173_UPF0282_UlaG_hydrolase"/>
</dbReference>
<dbReference type="NCBIfam" id="NF001911">
    <property type="entry name" value="PRK00685.1"/>
    <property type="match status" value="1"/>
</dbReference>
<dbReference type="PANTHER" id="PTHR43546:SF3">
    <property type="entry name" value="UPF0173 METAL-DEPENDENT HYDROLASE MJ1163"/>
    <property type="match status" value="1"/>
</dbReference>
<dbReference type="PANTHER" id="PTHR43546">
    <property type="entry name" value="UPF0173 METAL-DEPENDENT HYDROLASE MJ1163-RELATED"/>
    <property type="match status" value="1"/>
</dbReference>
<dbReference type="Pfam" id="PF12706">
    <property type="entry name" value="Lactamase_B_2"/>
    <property type="match status" value="1"/>
</dbReference>
<dbReference type="SMART" id="SM00849">
    <property type="entry name" value="Lactamase_B"/>
    <property type="match status" value="1"/>
</dbReference>
<dbReference type="SUPFAM" id="SSF56281">
    <property type="entry name" value="Metallo-hydrolase/oxidoreductase"/>
    <property type="match status" value="1"/>
</dbReference>
<name>Y516_METST</name>
<comment type="similarity">
    <text evidence="1">Belongs to the UPF0173 family.</text>
</comment>
<keyword id="KW-0378">Hydrolase</keyword>
<keyword id="KW-1185">Reference proteome</keyword>
<accession>Q2NGY8</accession>
<organism>
    <name type="scientific">Methanosphaera stadtmanae (strain ATCC 43021 / DSM 3091 / JCM 11832 / MCB-3)</name>
    <dbReference type="NCBI Taxonomy" id="339860"/>
    <lineage>
        <taxon>Archaea</taxon>
        <taxon>Methanobacteriati</taxon>
        <taxon>Methanobacteriota</taxon>
        <taxon>Methanomada group</taxon>
        <taxon>Methanobacteria</taxon>
        <taxon>Methanobacteriales</taxon>
        <taxon>Methanobacteriaceae</taxon>
        <taxon>Methanosphaera</taxon>
    </lineage>
</organism>
<reference key="1">
    <citation type="journal article" date="2006" name="J. Bacteriol.">
        <title>The genome sequence of Methanosphaera stadtmanae reveals why this human intestinal archaeon is restricted to methanol and H2 for methane formation and ATP synthesis.</title>
        <authorList>
            <person name="Fricke W.F."/>
            <person name="Seedorf H."/>
            <person name="Henne A."/>
            <person name="Kruer M."/>
            <person name="Liesegang H."/>
            <person name="Hedderich R."/>
            <person name="Gottschalk G."/>
            <person name="Thauer R.K."/>
        </authorList>
    </citation>
    <scope>NUCLEOTIDE SEQUENCE [LARGE SCALE GENOMIC DNA]</scope>
    <source>
        <strain>ATCC 43021 / DSM 3091 / JCM 11832 / MCB-3</strain>
    </source>
</reference>
<gene>
    <name type="ordered locus">Msp_0516</name>
</gene>
<protein>
    <recommendedName>
        <fullName evidence="1">UPF0173 metal-dependent hydrolase Msp_0516</fullName>
    </recommendedName>
</protein>
<evidence type="ECO:0000255" key="1">
    <source>
        <dbReference type="HAMAP-Rule" id="MF_00457"/>
    </source>
</evidence>
<feature type="chain" id="PRO_0000367234" description="UPF0173 metal-dependent hydrolase Msp_0516">
    <location>
        <begin position="1"/>
        <end position="234"/>
    </location>
</feature>
<proteinExistence type="inferred from homology"/>